<proteinExistence type="inferred from homology"/>
<evidence type="ECO:0000255" key="1">
    <source>
        <dbReference type="HAMAP-Rule" id="MF_00034"/>
    </source>
</evidence>
<reference key="1">
    <citation type="journal article" date="2004" name="PLoS Biol.">
        <title>Phylogenomics of the reproductive parasite Wolbachia pipientis wMel: a streamlined genome overrun by mobile genetic elements.</title>
        <authorList>
            <person name="Wu M."/>
            <person name="Sun L.V."/>
            <person name="Vamathevan J.J."/>
            <person name="Riegler M."/>
            <person name="DeBoy R.T."/>
            <person name="Brownlie J.C."/>
            <person name="McGraw E.A."/>
            <person name="Martin W."/>
            <person name="Esser C."/>
            <person name="Ahmadinejad N."/>
            <person name="Wiegand C."/>
            <person name="Madupu R."/>
            <person name="Beanan M.J."/>
            <person name="Brinkac L.M."/>
            <person name="Daugherty S.C."/>
            <person name="Durkin A.S."/>
            <person name="Kolonay J.F."/>
            <person name="Nelson W.C."/>
            <person name="Mohamoud Y."/>
            <person name="Lee P."/>
            <person name="Berry K.J."/>
            <person name="Young M.B."/>
            <person name="Utterback T.R."/>
            <person name="Weidman J.F."/>
            <person name="Nierman W.C."/>
            <person name="Paulsen I.T."/>
            <person name="Nelson K.E."/>
            <person name="Tettelin H."/>
            <person name="O'Neill S.L."/>
            <person name="Eisen J.A."/>
        </authorList>
    </citation>
    <scope>NUCLEOTIDE SEQUENCE [LARGE SCALE GENOMIC DNA]</scope>
</reference>
<feature type="chain" id="PRO_0000183148" description="Crossover junction endodeoxyribonuclease RuvC">
    <location>
        <begin position="1"/>
        <end position="162"/>
    </location>
</feature>
<feature type="active site" evidence="1">
    <location>
        <position position="8"/>
    </location>
</feature>
<feature type="active site" evidence="1">
    <location>
        <position position="69"/>
    </location>
</feature>
<feature type="active site" evidence="1">
    <location>
        <position position="141"/>
    </location>
</feature>
<feature type="binding site" evidence="1">
    <location>
        <position position="8"/>
    </location>
    <ligand>
        <name>Mg(2+)</name>
        <dbReference type="ChEBI" id="CHEBI:18420"/>
        <label>1</label>
    </ligand>
</feature>
<feature type="binding site" evidence="1">
    <location>
        <position position="69"/>
    </location>
    <ligand>
        <name>Mg(2+)</name>
        <dbReference type="ChEBI" id="CHEBI:18420"/>
        <label>2</label>
    </ligand>
</feature>
<feature type="binding site" evidence="1">
    <location>
        <position position="141"/>
    </location>
    <ligand>
        <name>Mg(2+)</name>
        <dbReference type="ChEBI" id="CHEBI:18420"/>
        <label>1</label>
    </ligand>
</feature>
<keyword id="KW-0963">Cytoplasm</keyword>
<keyword id="KW-0227">DNA damage</keyword>
<keyword id="KW-0233">DNA recombination</keyword>
<keyword id="KW-0234">DNA repair</keyword>
<keyword id="KW-0238">DNA-binding</keyword>
<keyword id="KW-0255">Endonuclease</keyword>
<keyword id="KW-0378">Hydrolase</keyword>
<keyword id="KW-0460">Magnesium</keyword>
<keyword id="KW-0479">Metal-binding</keyword>
<keyword id="KW-0540">Nuclease</keyword>
<accession>Q73IL5</accession>
<organism>
    <name type="scientific">Wolbachia pipientis wMel</name>
    <dbReference type="NCBI Taxonomy" id="163164"/>
    <lineage>
        <taxon>Bacteria</taxon>
        <taxon>Pseudomonadati</taxon>
        <taxon>Pseudomonadota</taxon>
        <taxon>Alphaproteobacteria</taxon>
        <taxon>Rickettsiales</taxon>
        <taxon>Anaplasmataceae</taxon>
        <taxon>Wolbachieae</taxon>
        <taxon>Wolbachia</taxon>
    </lineage>
</organism>
<sequence length="162" mass="17661">MVKIIGLDPGISKTGWAIISLNEKNNIEFLGGGTISTDGKLGTGERLHIIFEQLKKVISLYSPNEAAVEKIFVNKNPKSSLTLGYARGVVILALKITKLTMNEYDANYVKKSITGNGHADKDQIIFMVKQIVKNLSIKCHHVADALAVAICHAYTKGSCFVE</sequence>
<name>RUVC_WOLPM</name>
<gene>
    <name evidence="1" type="primary">ruvC</name>
    <name type="ordered locus">WD_0142</name>
</gene>
<dbReference type="EC" id="3.1.21.10" evidence="1"/>
<dbReference type="EMBL" id="AE017196">
    <property type="protein sequence ID" value="AAS13896.1"/>
    <property type="molecule type" value="Genomic_DNA"/>
</dbReference>
<dbReference type="RefSeq" id="WP_010962392.1">
    <property type="nucleotide sequence ID" value="NZ_OX384529.1"/>
</dbReference>
<dbReference type="SMR" id="Q73IL5"/>
<dbReference type="EnsemblBacteria" id="AAS13896">
    <property type="protein sequence ID" value="AAS13896"/>
    <property type="gene ID" value="WD_0142"/>
</dbReference>
<dbReference type="GeneID" id="70035634"/>
<dbReference type="KEGG" id="wol:WD_0142"/>
<dbReference type="eggNOG" id="COG0817">
    <property type="taxonomic scope" value="Bacteria"/>
</dbReference>
<dbReference type="Proteomes" id="UP000008215">
    <property type="component" value="Chromosome"/>
</dbReference>
<dbReference type="GO" id="GO:0005737">
    <property type="term" value="C:cytoplasm"/>
    <property type="evidence" value="ECO:0007669"/>
    <property type="project" value="UniProtKB-SubCell"/>
</dbReference>
<dbReference type="GO" id="GO:0048476">
    <property type="term" value="C:Holliday junction resolvase complex"/>
    <property type="evidence" value="ECO:0007669"/>
    <property type="project" value="UniProtKB-UniRule"/>
</dbReference>
<dbReference type="GO" id="GO:0008821">
    <property type="term" value="F:crossover junction DNA endonuclease activity"/>
    <property type="evidence" value="ECO:0007669"/>
    <property type="project" value="UniProtKB-UniRule"/>
</dbReference>
<dbReference type="GO" id="GO:0003677">
    <property type="term" value="F:DNA binding"/>
    <property type="evidence" value="ECO:0007669"/>
    <property type="project" value="UniProtKB-KW"/>
</dbReference>
<dbReference type="GO" id="GO:0000287">
    <property type="term" value="F:magnesium ion binding"/>
    <property type="evidence" value="ECO:0007669"/>
    <property type="project" value="UniProtKB-UniRule"/>
</dbReference>
<dbReference type="GO" id="GO:0006310">
    <property type="term" value="P:DNA recombination"/>
    <property type="evidence" value="ECO:0007669"/>
    <property type="project" value="UniProtKB-UniRule"/>
</dbReference>
<dbReference type="GO" id="GO:0006281">
    <property type="term" value="P:DNA repair"/>
    <property type="evidence" value="ECO:0007669"/>
    <property type="project" value="UniProtKB-UniRule"/>
</dbReference>
<dbReference type="CDD" id="cd16962">
    <property type="entry name" value="RuvC"/>
    <property type="match status" value="1"/>
</dbReference>
<dbReference type="FunFam" id="3.30.420.10:FF:000002">
    <property type="entry name" value="Crossover junction endodeoxyribonuclease RuvC"/>
    <property type="match status" value="1"/>
</dbReference>
<dbReference type="Gene3D" id="3.30.420.10">
    <property type="entry name" value="Ribonuclease H-like superfamily/Ribonuclease H"/>
    <property type="match status" value="1"/>
</dbReference>
<dbReference type="HAMAP" id="MF_00034">
    <property type="entry name" value="RuvC"/>
    <property type="match status" value="1"/>
</dbReference>
<dbReference type="InterPro" id="IPR012337">
    <property type="entry name" value="RNaseH-like_sf"/>
</dbReference>
<dbReference type="InterPro" id="IPR036397">
    <property type="entry name" value="RNaseH_sf"/>
</dbReference>
<dbReference type="InterPro" id="IPR002176">
    <property type="entry name" value="X-over_junc_endoDNase_RuvC"/>
</dbReference>
<dbReference type="NCBIfam" id="TIGR00228">
    <property type="entry name" value="ruvC"/>
    <property type="match status" value="1"/>
</dbReference>
<dbReference type="PANTHER" id="PTHR30194">
    <property type="entry name" value="CROSSOVER JUNCTION ENDODEOXYRIBONUCLEASE RUVC"/>
    <property type="match status" value="1"/>
</dbReference>
<dbReference type="PANTHER" id="PTHR30194:SF3">
    <property type="entry name" value="CROSSOVER JUNCTION ENDODEOXYRIBONUCLEASE RUVC"/>
    <property type="match status" value="1"/>
</dbReference>
<dbReference type="Pfam" id="PF02075">
    <property type="entry name" value="RuvC"/>
    <property type="match status" value="1"/>
</dbReference>
<dbReference type="PRINTS" id="PR00696">
    <property type="entry name" value="RSOLVASERUVC"/>
</dbReference>
<dbReference type="SUPFAM" id="SSF53098">
    <property type="entry name" value="Ribonuclease H-like"/>
    <property type="match status" value="1"/>
</dbReference>
<comment type="function">
    <text evidence="1">The RuvA-RuvB-RuvC complex processes Holliday junction (HJ) DNA during genetic recombination and DNA repair. Endonuclease that resolves HJ intermediates. Cleaves cruciform DNA by making single-stranded nicks across the HJ at symmetrical positions within the homologous arms, yielding a 5'-phosphate and a 3'-hydroxyl group; requires a central core of homology in the junction. The consensus cleavage sequence is 5'-(A/T)TT(C/G)-3'. Cleavage occurs on the 3'-side of the TT dinucleotide at the point of strand exchange. HJ branch migration catalyzed by RuvA-RuvB allows RuvC to scan DNA until it finds its consensus sequence, where it cleaves and resolves the cruciform DNA.</text>
</comment>
<comment type="catalytic activity">
    <reaction evidence="1">
        <text>Endonucleolytic cleavage at a junction such as a reciprocal single-stranded crossover between two homologous DNA duplexes (Holliday junction).</text>
        <dbReference type="EC" id="3.1.21.10"/>
    </reaction>
</comment>
<comment type="cofactor">
    <cofactor evidence="1">
        <name>Mg(2+)</name>
        <dbReference type="ChEBI" id="CHEBI:18420"/>
    </cofactor>
    <text evidence="1">Binds 2 Mg(2+) ion per subunit.</text>
</comment>
<comment type="subunit">
    <text evidence="1">Homodimer which binds Holliday junction (HJ) DNA. The HJ becomes 2-fold symmetrical on binding to RuvC with unstacked arms; it has a different conformation from HJ DNA in complex with RuvA. In the full resolvosome a probable DNA-RuvA(4)-RuvB(12)-RuvC(2) complex forms which resolves the HJ.</text>
</comment>
<comment type="subcellular location">
    <subcellularLocation>
        <location evidence="1">Cytoplasm</location>
    </subcellularLocation>
</comment>
<comment type="similarity">
    <text evidence="1">Belongs to the RuvC family.</text>
</comment>
<protein>
    <recommendedName>
        <fullName evidence="1">Crossover junction endodeoxyribonuclease RuvC</fullName>
        <ecNumber evidence="1">3.1.21.10</ecNumber>
    </recommendedName>
    <alternativeName>
        <fullName evidence="1">Holliday junction nuclease RuvC</fullName>
    </alternativeName>
    <alternativeName>
        <fullName evidence="1">Holliday junction resolvase RuvC</fullName>
    </alternativeName>
</protein>